<comment type="function">
    <text evidence="2">Essential for biosynthesis of the polyamines spermidine and spermine. Essential for polyamine homeostasis, and normal plant embryogenesis, growth and development.</text>
</comment>
<comment type="catalytic activity">
    <reaction evidence="2">
        <text>S-adenosyl-L-methionine + H(+) = S-adenosyl 3-(methylsulfanyl)propylamine + CO2</text>
        <dbReference type="Rhea" id="RHEA:15981"/>
        <dbReference type="ChEBI" id="CHEBI:15378"/>
        <dbReference type="ChEBI" id="CHEBI:16526"/>
        <dbReference type="ChEBI" id="CHEBI:57443"/>
        <dbReference type="ChEBI" id="CHEBI:59789"/>
        <dbReference type="EC" id="4.1.1.50"/>
    </reaction>
</comment>
<comment type="cofactor">
    <cofactor evidence="1">
        <name>pyruvate</name>
        <dbReference type="ChEBI" id="CHEBI:15361"/>
    </cofactor>
    <text evidence="1">Binds 1 pyruvoyl group covalently per subunit.</text>
</comment>
<comment type="pathway">
    <text evidence="7">Amine and polyamine biosynthesis; S-adenosylmethioninamine biosynthesis; S-adenosylmethioninamine from S-adenosyl-L-methionine: step 1/1.</text>
</comment>
<comment type="induction">
    <text evidence="3 4">By auxin (PubMed:20386573) and infection by Plasmodiophora brassicae (PubMed:18305204).</text>
</comment>
<comment type="PTM">
    <text evidence="1">Is synthesized initially as an inactive proenzyme. Formation of the active enzyme involves a self-maturation process in which the active site pyruvoyl group is generated from an internal serine residue via an autocatalytic post-translational modification. Two non-identical subunits are generated from the proenzyme in this reaction, and the pyruvate is formed at the N-terminus of the alpha chain, which is derived from the carboxyl end of the proenzyme. The post-translation cleavage follows an unusual pathway, termed non-hydrolytic serinolysis, in which the side chain hydroxyl group of the serine supplies its oxygen atom to form the C-terminus of the beta chain, while the remainder of the serine residue undergoes an oxidative deamination to produce ammonia and the pyruvoyl group blocking the N-terminus of the alpha chain (By similarity).</text>
</comment>
<comment type="similarity">
    <text evidence="7">Belongs to the eukaryotic AdoMetDC family.</text>
</comment>
<keyword id="KW-0068">Autocatalytic cleavage</keyword>
<keyword id="KW-0210">Decarboxylase</keyword>
<keyword id="KW-0456">Lyase</keyword>
<keyword id="KW-0620">Polyamine biosynthesis</keyword>
<keyword id="KW-0670">Pyruvate</keyword>
<keyword id="KW-1185">Reference proteome</keyword>
<keyword id="KW-0949">S-adenosyl-L-methionine</keyword>
<keyword id="KW-0704">Schiff base</keyword>
<keyword id="KW-0745">Spermidine biosynthesis</keyword>
<keyword id="KW-0865">Zymogen</keyword>
<reference key="1">
    <citation type="journal article" date="2001" name="Biochem. J.">
        <title>Characterization of monocot and dicot plant S-adenosyl-L-methionine decarboxylase gene families including identification in the mRNA of a highly conserved pair of upstream overlapping open reading frames.</title>
        <authorList>
            <person name="Franceschetti M."/>
            <person name="Hanfrey C."/>
            <person name="Scaramagli S."/>
            <person name="Torrigiani P."/>
            <person name="Bagni N."/>
            <person name="Michael A.J."/>
        </authorList>
    </citation>
    <scope>NUCLEOTIDE SEQUENCE [GENOMIC DNA]</scope>
    <source>
        <strain>cv. Columbia</strain>
    </source>
</reference>
<reference key="2">
    <citation type="journal article" date="2000" name="Nature">
        <title>Sequence and analysis of chromosome 5 of the plant Arabidopsis thaliana.</title>
        <authorList>
            <person name="Tabata S."/>
            <person name="Kaneko T."/>
            <person name="Nakamura Y."/>
            <person name="Kotani H."/>
            <person name="Kato T."/>
            <person name="Asamizu E."/>
            <person name="Miyajima N."/>
            <person name="Sasamoto S."/>
            <person name="Kimura T."/>
            <person name="Hosouchi T."/>
            <person name="Kawashima K."/>
            <person name="Kohara M."/>
            <person name="Matsumoto M."/>
            <person name="Matsuno A."/>
            <person name="Muraki A."/>
            <person name="Nakayama S."/>
            <person name="Nakazaki N."/>
            <person name="Naruo K."/>
            <person name="Okumura S."/>
            <person name="Shinpo S."/>
            <person name="Takeuchi C."/>
            <person name="Wada T."/>
            <person name="Watanabe A."/>
            <person name="Yamada M."/>
            <person name="Yasuda M."/>
            <person name="Sato S."/>
            <person name="de la Bastide M."/>
            <person name="Huang E."/>
            <person name="Spiegel L."/>
            <person name="Gnoj L."/>
            <person name="O'Shaughnessy A."/>
            <person name="Preston R."/>
            <person name="Habermann K."/>
            <person name="Murray J."/>
            <person name="Johnson D."/>
            <person name="Rohlfing T."/>
            <person name="Nelson J."/>
            <person name="Stoneking T."/>
            <person name="Pepin K."/>
            <person name="Spieth J."/>
            <person name="Sekhon M."/>
            <person name="Armstrong J."/>
            <person name="Becker M."/>
            <person name="Belter E."/>
            <person name="Cordum H."/>
            <person name="Cordes M."/>
            <person name="Courtney L."/>
            <person name="Courtney W."/>
            <person name="Dante M."/>
            <person name="Du H."/>
            <person name="Edwards J."/>
            <person name="Fryman J."/>
            <person name="Haakensen B."/>
            <person name="Lamar E."/>
            <person name="Latreille P."/>
            <person name="Leonard S."/>
            <person name="Meyer R."/>
            <person name="Mulvaney E."/>
            <person name="Ozersky P."/>
            <person name="Riley A."/>
            <person name="Strowmatt C."/>
            <person name="Wagner-McPherson C."/>
            <person name="Wollam A."/>
            <person name="Yoakum M."/>
            <person name="Bell M."/>
            <person name="Dedhia N."/>
            <person name="Parnell L."/>
            <person name="Shah R."/>
            <person name="Rodriguez M."/>
            <person name="Hoon See L."/>
            <person name="Vil D."/>
            <person name="Baker J."/>
            <person name="Kirchoff K."/>
            <person name="Toth K."/>
            <person name="King L."/>
            <person name="Bahret A."/>
            <person name="Miller B."/>
            <person name="Marra M.A."/>
            <person name="Martienssen R."/>
            <person name="McCombie W.R."/>
            <person name="Wilson R.K."/>
            <person name="Murphy G."/>
            <person name="Bancroft I."/>
            <person name="Volckaert G."/>
            <person name="Wambutt R."/>
            <person name="Duesterhoeft A."/>
            <person name="Stiekema W."/>
            <person name="Pohl T."/>
            <person name="Entian K.-D."/>
            <person name="Terryn N."/>
            <person name="Hartley N."/>
            <person name="Bent E."/>
            <person name="Johnson S."/>
            <person name="Langham S.-A."/>
            <person name="McCullagh B."/>
            <person name="Robben J."/>
            <person name="Grymonprez B."/>
            <person name="Zimmermann W."/>
            <person name="Ramsperger U."/>
            <person name="Wedler H."/>
            <person name="Balke K."/>
            <person name="Wedler E."/>
            <person name="Peters S."/>
            <person name="van Staveren M."/>
            <person name="Dirkse W."/>
            <person name="Mooijman P."/>
            <person name="Klein Lankhorst R."/>
            <person name="Weitzenegger T."/>
            <person name="Bothe G."/>
            <person name="Rose M."/>
            <person name="Hauf J."/>
            <person name="Berneiser S."/>
            <person name="Hempel S."/>
            <person name="Feldpausch M."/>
            <person name="Lamberth S."/>
            <person name="Villarroel R."/>
            <person name="Gielen J."/>
            <person name="Ardiles W."/>
            <person name="Bents O."/>
            <person name="Lemcke K."/>
            <person name="Kolesov G."/>
            <person name="Mayer K.F.X."/>
            <person name="Rudd S."/>
            <person name="Schoof H."/>
            <person name="Schueller C."/>
            <person name="Zaccaria P."/>
            <person name="Mewes H.-W."/>
            <person name="Bevan M."/>
            <person name="Fransz P.F."/>
        </authorList>
    </citation>
    <scope>NUCLEOTIDE SEQUENCE [LARGE SCALE GENOMIC DNA]</scope>
    <source>
        <strain>cv. Columbia</strain>
    </source>
</reference>
<reference key="3">
    <citation type="journal article" date="2017" name="Plant J.">
        <title>Araport11: a complete reannotation of the Arabidopsis thaliana reference genome.</title>
        <authorList>
            <person name="Cheng C.Y."/>
            <person name="Krishnakumar V."/>
            <person name="Chan A.P."/>
            <person name="Thibaud-Nissen F."/>
            <person name="Schobel S."/>
            <person name="Town C.D."/>
        </authorList>
    </citation>
    <scope>GENOME REANNOTATION</scope>
    <source>
        <strain>cv. Columbia</strain>
    </source>
</reference>
<reference key="4">
    <citation type="journal article" date="2003" name="Science">
        <title>Empirical analysis of transcriptional activity in the Arabidopsis genome.</title>
        <authorList>
            <person name="Yamada K."/>
            <person name="Lim J."/>
            <person name="Dale J.M."/>
            <person name="Chen H."/>
            <person name="Shinn P."/>
            <person name="Palm C.J."/>
            <person name="Southwick A.M."/>
            <person name="Wu H.C."/>
            <person name="Kim C.J."/>
            <person name="Nguyen M."/>
            <person name="Pham P.K."/>
            <person name="Cheuk R.F."/>
            <person name="Karlin-Newmann G."/>
            <person name="Liu S.X."/>
            <person name="Lam B."/>
            <person name="Sakano H."/>
            <person name="Wu T."/>
            <person name="Yu G."/>
            <person name="Miranda M."/>
            <person name="Quach H.L."/>
            <person name="Tripp M."/>
            <person name="Chang C.H."/>
            <person name="Lee J.M."/>
            <person name="Toriumi M.J."/>
            <person name="Chan M.M."/>
            <person name="Tang C.C."/>
            <person name="Onodera C.S."/>
            <person name="Deng J.M."/>
            <person name="Akiyama K."/>
            <person name="Ansari Y."/>
            <person name="Arakawa T."/>
            <person name="Banh J."/>
            <person name="Banno F."/>
            <person name="Bowser L."/>
            <person name="Brooks S.Y."/>
            <person name="Carninci P."/>
            <person name="Chao Q."/>
            <person name="Choy N."/>
            <person name="Enju A."/>
            <person name="Goldsmith A.D."/>
            <person name="Gurjal M."/>
            <person name="Hansen N.F."/>
            <person name="Hayashizaki Y."/>
            <person name="Johnson-Hopson C."/>
            <person name="Hsuan V.W."/>
            <person name="Iida K."/>
            <person name="Karnes M."/>
            <person name="Khan S."/>
            <person name="Koesema E."/>
            <person name="Ishida J."/>
            <person name="Jiang P.X."/>
            <person name="Jones T."/>
            <person name="Kawai J."/>
            <person name="Kamiya A."/>
            <person name="Meyers C."/>
            <person name="Nakajima M."/>
            <person name="Narusaka M."/>
            <person name="Seki M."/>
            <person name="Sakurai T."/>
            <person name="Satou M."/>
            <person name="Tamse R."/>
            <person name="Vaysberg M."/>
            <person name="Wallender E.K."/>
            <person name="Wong C."/>
            <person name="Yamamura Y."/>
            <person name="Yuan S."/>
            <person name="Shinozaki K."/>
            <person name="Davis R.W."/>
            <person name="Theologis A."/>
            <person name="Ecker J.R."/>
        </authorList>
    </citation>
    <scope>NUCLEOTIDE SEQUENCE [LARGE SCALE MRNA]</scope>
    <source>
        <strain>cv. Columbia</strain>
    </source>
</reference>
<reference key="5">
    <citation type="journal article" date="2006" name="Cell Res.">
        <title>BUD2, encoding an S-adenosylmethionine decarboxylase, is required for Arabidopsis growth and development.</title>
        <authorList>
            <person name="Ge C."/>
            <person name="Cui X."/>
            <person name="Wang Y."/>
            <person name="Hu Y."/>
            <person name="Fu Z."/>
            <person name="Zhang D."/>
            <person name="Cheng Z."/>
            <person name="Li J."/>
        </authorList>
    </citation>
    <scope>GENE FAMILY</scope>
</reference>
<reference key="6">
    <citation type="journal article" date="2008" name="Plant Physiol.">
        <title>Differential regulation of root arginine catabolism and polyamine metabolism in clubroot-susceptible and partially resistant Arabidopsis genotypes.</title>
        <authorList>
            <person name="Jubault M."/>
            <person name="Hamon C."/>
            <person name="Gravot A."/>
            <person name="Lariagon C."/>
            <person name="Delourme R."/>
            <person name="Bouchereau A."/>
            <person name="Manzanares-Dauleux M.J."/>
        </authorList>
    </citation>
    <scope>INDUCTION BY PLASMODIOPHORA BRASSICAE INFECTION</scope>
</reference>
<reference key="7">
    <citation type="journal article" date="2010" name="Cell Res.">
        <title>The BUD2 mutation affects plant architecture through altering cytokinin and auxin responses in Arabidopsis.</title>
        <authorList>
            <person name="Cui X."/>
            <person name="Ge C."/>
            <person name="Wang R."/>
            <person name="Wang H."/>
            <person name="Chen W."/>
            <person name="Fu Z."/>
            <person name="Jiang X."/>
            <person name="Li J."/>
            <person name="Wang Y."/>
        </authorList>
    </citation>
    <scope>INDUCTION BY AUXIN</scope>
</reference>
<proteinExistence type="evidence at transcript level"/>
<accession>Q9S7T9</accession>
<dbReference type="EC" id="4.1.1.50" evidence="2"/>
<dbReference type="EMBL" id="AJ252212">
    <property type="protein sequence ID" value="CAB64672.1"/>
    <property type="molecule type" value="Genomic_DNA"/>
</dbReference>
<dbReference type="EMBL" id="AJ251915">
    <property type="protein sequence ID" value="CAB63805.1"/>
    <property type="molecule type" value="mRNA"/>
</dbReference>
<dbReference type="EMBL" id="AL391145">
    <property type="protein sequence ID" value="CAC01794.1"/>
    <property type="molecule type" value="Genomic_DNA"/>
</dbReference>
<dbReference type="EMBL" id="CP002688">
    <property type="protein sequence ID" value="AED92227.1"/>
    <property type="molecule type" value="Genomic_DNA"/>
</dbReference>
<dbReference type="EMBL" id="CP002688">
    <property type="protein sequence ID" value="AED92228.1"/>
    <property type="molecule type" value="Genomic_DNA"/>
</dbReference>
<dbReference type="EMBL" id="AF436825">
    <property type="protein sequence ID" value="AAL32007.1"/>
    <property type="molecule type" value="mRNA"/>
</dbReference>
<dbReference type="EMBL" id="AY066030">
    <property type="protein sequence ID" value="AAL47397.1"/>
    <property type="molecule type" value="mRNA"/>
</dbReference>
<dbReference type="PIR" id="T51378">
    <property type="entry name" value="T51378"/>
</dbReference>
<dbReference type="RefSeq" id="NP_001031888.1">
    <property type="nucleotide sequence ID" value="NM_001036811.1"/>
</dbReference>
<dbReference type="RefSeq" id="NP_197099.1">
    <property type="nucleotide sequence ID" value="NM_121600.3"/>
</dbReference>
<dbReference type="SMR" id="Q9S7T9"/>
<dbReference type="BioGRID" id="16728">
    <property type="interactions" value="1"/>
</dbReference>
<dbReference type="FunCoup" id="Q9S7T9">
    <property type="interactions" value="2190"/>
</dbReference>
<dbReference type="STRING" id="3702.Q9S7T9"/>
<dbReference type="PaxDb" id="3702-AT5G15950.2"/>
<dbReference type="EnsemblPlants" id="AT5G15950.1">
    <property type="protein sequence ID" value="AT5G15950.1"/>
    <property type="gene ID" value="AT5G15950"/>
</dbReference>
<dbReference type="EnsemblPlants" id="AT5G15950.2">
    <property type="protein sequence ID" value="AT5G15950.2"/>
    <property type="gene ID" value="AT5G15950"/>
</dbReference>
<dbReference type="GeneID" id="831452"/>
<dbReference type="Gramene" id="AT5G15950.1">
    <property type="protein sequence ID" value="AT5G15950.1"/>
    <property type="gene ID" value="AT5G15950"/>
</dbReference>
<dbReference type="Gramene" id="AT5G15950.2">
    <property type="protein sequence ID" value="AT5G15950.2"/>
    <property type="gene ID" value="AT5G15950"/>
</dbReference>
<dbReference type="KEGG" id="ath:AT5G15950"/>
<dbReference type="Araport" id="AT5G15950"/>
<dbReference type="TAIR" id="AT5G15950">
    <property type="gene designation" value="SAMDC2"/>
</dbReference>
<dbReference type="eggNOG" id="KOG0788">
    <property type="taxonomic scope" value="Eukaryota"/>
</dbReference>
<dbReference type="HOGENOM" id="CLU_023050_2_1_1"/>
<dbReference type="InParanoid" id="Q9S7T9"/>
<dbReference type="OMA" id="NASECKI"/>
<dbReference type="PhylomeDB" id="Q9S7T9"/>
<dbReference type="BioCyc" id="ARA:AT5G15950-MONOMER"/>
<dbReference type="UniPathway" id="UPA00331">
    <property type="reaction ID" value="UER00451"/>
</dbReference>
<dbReference type="PRO" id="PR:Q9S7T9"/>
<dbReference type="Proteomes" id="UP000006548">
    <property type="component" value="Chromosome 5"/>
</dbReference>
<dbReference type="ExpressionAtlas" id="Q9S7T9">
    <property type="expression patterns" value="baseline and differential"/>
</dbReference>
<dbReference type="GO" id="GO:0004014">
    <property type="term" value="F:adenosylmethionine decarboxylase activity"/>
    <property type="evidence" value="ECO:0007669"/>
    <property type="project" value="UniProtKB-EC"/>
</dbReference>
<dbReference type="GO" id="GO:0008295">
    <property type="term" value="P:spermidine biosynthetic process"/>
    <property type="evidence" value="ECO:0007669"/>
    <property type="project" value="UniProtKB-KW"/>
</dbReference>
<dbReference type="GO" id="GO:0006597">
    <property type="term" value="P:spermine biosynthetic process"/>
    <property type="evidence" value="ECO:0007669"/>
    <property type="project" value="InterPro"/>
</dbReference>
<dbReference type="FunFam" id="3.30.360.50:FF:000001">
    <property type="entry name" value="S-adenosylmethionine decarboxylase proenzyme"/>
    <property type="match status" value="1"/>
</dbReference>
<dbReference type="FunFam" id="3.60.90.10:FF:000002">
    <property type="entry name" value="S-adenosylmethionine decarboxylase proenzyme"/>
    <property type="match status" value="1"/>
</dbReference>
<dbReference type="Gene3D" id="3.30.360.50">
    <property type="entry name" value="S-adenosylmethionine decarboxylase"/>
    <property type="match status" value="1"/>
</dbReference>
<dbReference type="Gene3D" id="3.60.90.10">
    <property type="entry name" value="S-adenosylmethionine decarboxylase"/>
    <property type="match status" value="1"/>
</dbReference>
<dbReference type="InterPro" id="IPR048283">
    <property type="entry name" value="AdoMetDC-like"/>
</dbReference>
<dbReference type="InterPro" id="IPR001985">
    <property type="entry name" value="S-AdoMet_decarboxylase_euk"/>
</dbReference>
<dbReference type="InterPro" id="IPR016067">
    <property type="entry name" value="S-AdoMet_deCO2ase_core"/>
</dbReference>
<dbReference type="InterPro" id="IPR018166">
    <property type="entry name" value="S-AdoMet_deCO2ase_CS"/>
</dbReference>
<dbReference type="NCBIfam" id="TIGR00535">
    <property type="entry name" value="SAM_DCase"/>
    <property type="match status" value="1"/>
</dbReference>
<dbReference type="PANTHER" id="PTHR11570">
    <property type="entry name" value="S-ADENOSYLMETHIONINE DECARBOXYLASE"/>
    <property type="match status" value="1"/>
</dbReference>
<dbReference type="PANTHER" id="PTHR11570:SF32">
    <property type="entry name" value="S-ADENOSYLMETHIONINE DECARBOXYLASE PROENZYME 2"/>
    <property type="match status" value="1"/>
</dbReference>
<dbReference type="Pfam" id="PF01536">
    <property type="entry name" value="SAM_decarbox"/>
    <property type="match status" value="1"/>
</dbReference>
<dbReference type="PIRSF" id="PIRSF001355">
    <property type="entry name" value="S-AdenosylMet_decarboxylase"/>
    <property type="match status" value="1"/>
</dbReference>
<dbReference type="SUPFAM" id="SSF56276">
    <property type="entry name" value="S-adenosylmethionine decarboxylase"/>
    <property type="match status" value="1"/>
</dbReference>
<dbReference type="PROSITE" id="PS01336">
    <property type="entry name" value="ADOMETDC"/>
    <property type="match status" value="1"/>
</dbReference>
<feature type="chain" id="PRO_0000029989" description="S-adenosylmethionine decarboxylase 2 beta chain" evidence="1">
    <location>
        <begin position="1"/>
        <end position="68"/>
    </location>
</feature>
<feature type="chain" id="PRO_0000029990" description="S-adenosylmethionine decarboxylase 2 alpha chain" evidence="1">
    <location>
        <begin position="69"/>
        <end position="362"/>
    </location>
</feature>
<feature type="active site" evidence="1">
    <location>
        <position position="9"/>
    </location>
</feature>
<feature type="active site" evidence="1">
    <location>
        <position position="12"/>
    </location>
</feature>
<feature type="active site" description="Schiff-base intermediate with substrate; via pyruvic acid" evidence="1">
    <location>
        <position position="69"/>
    </location>
</feature>
<feature type="active site" description="Proton donor; for catalytic activity" evidence="1">
    <location>
        <position position="83"/>
    </location>
</feature>
<feature type="active site" description="Proton acceptor; for processing activity" evidence="1">
    <location>
        <position position="232"/>
    </location>
</feature>
<feature type="active site" description="Proton acceptor; for processing activity" evidence="1">
    <location>
        <position position="245"/>
    </location>
</feature>
<feature type="binding site" evidence="1">
    <location>
        <position position="68"/>
    </location>
    <ligand>
        <name>substrate</name>
    </ligand>
</feature>
<feature type="binding site" evidence="1">
    <location>
        <position position="249"/>
    </location>
    <ligand>
        <name>substrate</name>
    </ligand>
</feature>
<feature type="site" description="Cleavage (non-hydrolytic); by autolysis" evidence="1">
    <location>
        <begin position="68"/>
        <end position="69"/>
    </location>
</feature>
<feature type="modified residue" description="Pyruvic acid (Ser); by autocatalysis" evidence="1">
    <location>
        <position position="69"/>
    </location>
</feature>
<name>DCAM2_ARATH</name>
<gene>
    <name evidence="6" type="primary">SAMDC2</name>
    <name type="ordered locus">At5g15950</name>
    <name type="ORF">F1N13.90</name>
</gene>
<organism>
    <name type="scientific">Arabidopsis thaliana</name>
    <name type="common">Mouse-ear cress</name>
    <dbReference type="NCBI Taxonomy" id="3702"/>
    <lineage>
        <taxon>Eukaryota</taxon>
        <taxon>Viridiplantae</taxon>
        <taxon>Streptophyta</taxon>
        <taxon>Embryophyta</taxon>
        <taxon>Tracheophyta</taxon>
        <taxon>Spermatophyta</taxon>
        <taxon>Magnoliopsida</taxon>
        <taxon>eudicotyledons</taxon>
        <taxon>Gunneridae</taxon>
        <taxon>Pentapetalae</taxon>
        <taxon>rosids</taxon>
        <taxon>malvids</taxon>
        <taxon>Brassicales</taxon>
        <taxon>Brassicaceae</taxon>
        <taxon>Camelineae</taxon>
        <taxon>Arabidopsis</taxon>
    </lineage>
</organism>
<protein>
    <recommendedName>
        <fullName evidence="7">S-adenosylmethionine decarboxylase proenzyme 2</fullName>
        <shortName evidence="5">AdoMetDC2</shortName>
        <ecNumber evidence="2">4.1.1.50</ecNumber>
    </recommendedName>
    <component>
        <recommendedName>
            <fullName evidence="1">S-adenosylmethionine decarboxylase 2 alpha chain</fullName>
        </recommendedName>
    </component>
    <component>
        <recommendedName>
            <fullName evidence="1">S-adenosylmethionine decarboxylase 2 beta chain</fullName>
        </recommendedName>
    </component>
</protein>
<sequence>MAMSAIGFEGYEKRLEVTFFEPGLFLDTQGKGLRALAKSQIDEILQPAECTIVSSLSNDQLDSYVLSESSLFIFPYKIVIKTCGTTKLLLSIEPLLRLAGELSLDVKAVRYTRGSFLCPGGQPFPHRNFSEEVSVLDGHFAKLGLSSVAYLMGNDDETKKWHVYSASSANSNNKNNVYTLEMCMTGLDKDKASVFYKNESSSAGSMTDNSGIRKILPQSQICDFEFEPCGYSMNSIEGDAISTIHVTPEDGFSYASFEAVGYDFTTMDLSHLVSKVLTCFKPKQFSVAVHSTVAQKSYDSGLSVDLDDYGCKESTMESLGEERGTVMYQRFEKLGRYCGSPRSTLKCEWSSNSSCNSEDEKE</sequence>
<evidence type="ECO:0000250" key="1">
    <source>
        <dbReference type="UniProtKB" id="P17707"/>
    </source>
</evidence>
<evidence type="ECO:0000250" key="2">
    <source>
        <dbReference type="UniProtKB" id="Q96286"/>
    </source>
</evidence>
<evidence type="ECO:0000269" key="3">
    <source>
    </source>
</evidence>
<evidence type="ECO:0000269" key="4">
    <source>
    </source>
</evidence>
<evidence type="ECO:0000303" key="5">
    <source>
    </source>
</evidence>
<evidence type="ECO:0000303" key="6">
    <source>
    </source>
</evidence>
<evidence type="ECO:0000305" key="7"/>